<protein>
    <recommendedName>
        <fullName evidence="1">Small ribosomal subunit protein uS2</fullName>
    </recommendedName>
    <alternativeName>
        <fullName evidence="2">30S ribosomal protein S2</fullName>
    </alternativeName>
</protein>
<gene>
    <name evidence="1" type="primary">rpsB</name>
    <name type="ordered locus">Bxeno_A2735</name>
    <name type="ORF">Bxe_A1682</name>
</gene>
<organism>
    <name type="scientific">Paraburkholderia xenovorans (strain LB400)</name>
    <dbReference type="NCBI Taxonomy" id="266265"/>
    <lineage>
        <taxon>Bacteria</taxon>
        <taxon>Pseudomonadati</taxon>
        <taxon>Pseudomonadota</taxon>
        <taxon>Betaproteobacteria</taxon>
        <taxon>Burkholderiales</taxon>
        <taxon>Burkholderiaceae</taxon>
        <taxon>Paraburkholderia</taxon>
    </lineage>
</organism>
<feature type="chain" id="PRO_1000003917" description="Small ribosomal subunit protein uS2">
    <location>
        <begin position="1"/>
        <end position="250"/>
    </location>
</feature>
<sequence length="250" mass="27370">MAVTMRQMLEAGVHFGHQTRFWNPKMAPFIFGHRNKIHIINLEKTLPMYNDALKYARQLAANRGTILFVGTKRQSRDTIAEEAQRAGMPYVNARWLGGMLTNFKTLKVSIKRLKDMEAALEAGETERMSKKEALLFEREMAKLQKSIGGVKDMGGIPDAIFVVDVGYHKIAVTEANKLGIPVIAVVDTNHSPEGIDYVIPGNDDASKAVALYTAGVADAIVEGRANAVNEVVQAARGGDGDEFVEVNAEA</sequence>
<accession>Q13XB6</accession>
<evidence type="ECO:0000255" key="1">
    <source>
        <dbReference type="HAMAP-Rule" id="MF_00291"/>
    </source>
</evidence>
<evidence type="ECO:0000305" key="2"/>
<name>RS2_PARXL</name>
<dbReference type="EMBL" id="CP000270">
    <property type="protein sequence ID" value="ABE31273.1"/>
    <property type="molecule type" value="Genomic_DNA"/>
</dbReference>
<dbReference type="RefSeq" id="WP_007181432.1">
    <property type="nucleotide sequence ID" value="NZ_CP008760.1"/>
</dbReference>
<dbReference type="SMR" id="Q13XB6"/>
<dbReference type="STRING" id="266265.Bxe_A1682"/>
<dbReference type="KEGG" id="bxb:DR64_3847"/>
<dbReference type="KEGG" id="bxe:Bxe_A1682"/>
<dbReference type="eggNOG" id="COG0052">
    <property type="taxonomic scope" value="Bacteria"/>
</dbReference>
<dbReference type="OrthoDB" id="9808036at2"/>
<dbReference type="Proteomes" id="UP000001817">
    <property type="component" value="Chromosome 1"/>
</dbReference>
<dbReference type="GO" id="GO:0022627">
    <property type="term" value="C:cytosolic small ribosomal subunit"/>
    <property type="evidence" value="ECO:0007669"/>
    <property type="project" value="TreeGrafter"/>
</dbReference>
<dbReference type="GO" id="GO:0003735">
    <property type="term" value="F:structural constituent of ribosome"/>
    <property type="evidence" value="ECO:0007669"/>
    <property type="project" value="InterPro"/>
</dbReference>
<dbReference type="GO" id="GO:0006412">
    <property type="term" value="P:translation"/>
    <property type="evidence" value="ECO:0007669"/>
    <property type="project" value="UniProtKB-UniRule"/>
</dbReference>
<dbReference type="CDD" id="cd01425">
    <property type="entry name" value="RPS2"/>
    <property type="match status" value="1"/>
</dbReference>
<dbReference type="FunFam" id="1.10.287.610:FF:000001">
    <property type="entry name" value="30S ribosomal protein S2"/>
    <property type="match status" value="1"/>
</dbReference>
<dbReference type="Gene3D" id="3.40.50.10490">
    <property type="entry name" value="Glucose-6-phosphate isomerase like protein, domain 1"/>
    <property type="match status" value="1"/>
</dbReference>
<dbReference type="Gene3D" id="1.10.287.610">
    <property type="entry name" value="Helix hairpin bin"/>
    <property type="match status" value="1"/>
</dbReference>
<dbReference type="HAMAP" id="MF_00291_B">
    <property type="entry name" value="Ribosomal_uS2_B"/>
    <property type="match status" value="1"/>
</dbReference>
<dbReference type="InterPro" id="IPR001865">
    <property type="entry name" value="Ribosomal_uS2"/>
</dbReference>
<dbReference type="InterPro" id="IPR005706">
    <property type="entry name" value="Ribosomal_uS2_bac/mit/plastid"/>
</dbReference>
<dbReference type="InterPro" id="IPR018130">
    <property type="entry name" value="Ribosomal_uS2_CS"/>
</dbReference>
<dbReference type="InterPro" id="IPR023591">
    <property type="entry name" value="Ribosomal_uS2_flav_dom_sf"/>
</dbReference>
<dbReference type="NCBIfam" id="TIGR01011">
    <property type="entry name" value="rpsB_bact"/>
    <property type="match status" value="1"/>
</dbReference>
<dbReference type="PANTHER" id="PTHR12534">
    <property type="entry name" value="30S RIBOSOMAL PROTEIN S2 PROKARYOTIC AND ORGANELLAR"/>
    <property type="match status" value="1"/>
</dbReference>
<dbReference type="PANTHER" id="PTHR12534:SF0">
    <property type="entry name" value="SMALL RIBOSOMAL SUBUNIT PROTEIN US2M"/>
    <property type="match status" value="1"/>
</dbReference>
<dbReference type="Pfam" id="PF00318">
    <property type="entry name" value="Ribosomal_S2"/>
    <property type="match status" value="1"/>
</dbReference>
<dbReference type="PRINTS" id="PR00395">
    <property type="entry name" value="RIBOSOMALS2"/>
</dbReference>
<dbReference type="SUPFAM" id="SSF52313">
    <property type="entry name" value="Ribosomal protein S2"/>
    <property type="match status" value="1"/>
</dbReference>
<dbReference type="PROSITE" id="PS00962">
    <property type="entry name" value="RIBOSOMAL_S2_1"/>
    <property type="match status" value="1"/>
</dbReference>
<comment type="similarity">
    <text evidence="1">Belongs to the universal ribosomal protein uS2 family.</text>
</comment>
<reference key="1">
    <citation type="journal article" date="2006" name="Proc. Natl. Acad. Sci. U.S.A.">
        <title>Burkholderia xenovorans LB400 harbors a multi-replicon, 9.73-Mbp genome shaped for versatility.</title>
        <authorList>
            <person name="Chain P.S.G."/>
            <person name="Denef V.J."/>
            <person name="Konstantinidis K.T."/>
            <person name="Vergez L.M."/>
            <person name="Agullo L."/>
            <person name="Reyes V.L."/>
            <person name="Hauser L."/>
            <person name="Cordova M."/>
            <person name="Gomez L."/>
            <person name="Gonzalez M."/>
            <person name="Land M."/>
            <person name="Lao V."/>
            <person name="Larimer F."/>
            <person name="LiPuma J.J."/>
            <person name="Mahenthiralingam E."/>
            <person name="Malfatti S.A."/>
            <person name="Marx C.J."/>
            <person name="Parnell J.J."/>
            <person name="Ramette A."/>
            <person name="Richardson P."/>
            <person name="Seeger M."/>
            <person name="Smith D."/>
            <person name="Spilker T."/>
            <person name="Sul W.J."/>
            <person name="Tsoi T.V."/>
            <person name="Ulrich L.E."/>
            <person name="Zhulin I.B."/>
            <person name="Tiedje J.M."/>
        </authorList>
    </citation>
    <scope>NUCLEOTIDE SEQUENCE [LARGE SCALE GENOMIC DNA]</scope>
    <source>
        <strain>LB400</strain>
    </source>
</reference>
<keyword id="KW-1185">Reference proteome</keyword>
<keyword id="KW-0687">Ribonucleoprotein</keyword>
<keyword id="KW-0689">Ribosomal protein</keyword>
<proteinExistence type="inferred from homology"/>